<feature type="initiator methionine" description="Removed">
    <location>
        <position position="1"/>
    </location>
</feature>
<feature type="chain" id="PRO_0000289093" description="Formin-like protein 2">
    <location>
        <begin position="2"/>
        <end position="1086"/>
    </location>
</feature>
<feature type="domain" description="GBD/FH3" evidence="4">
    <location>
        <begin position="23"/>
        <end position="469"/>
    </location>
</feature>
<feature type="domain" description="FH2" evidence="5">
    <location>
        <begin position="616"/>
        <end position="1007"/>
    </location>
</feature>
<feature type="domain" description="DAD" evidence="3">
    <location>
        <begin position="1040"/>
        <end position="1079"/>
    </location>
</feature>
<feature type="region of interest" description="Disordered" evidence="6">
    <location>
        <begin position="513"/>
        <end position="597"/>
    </location>
</feature>
<feature type="compositionally biased region" description="Pro residues" evidence="6">
    <location>
        <begin position="525"/>
        <end position="537"/>
    </location>
</feature>
<feature type="compositionally biased region" description="Polar residues" evidence="6">
    <location>
        <begin position="538"/>
        <end position="547"/>
    </location>
</feature>
<feature type="compositionally biased region" description="Pro residues" evidence="6">
    <location>
        <begin position="548"/>
        <end position="576"/>
    </location>
</feature>
<feature type="compositionally biased region" description="Pro residues" evidence="6">
    <location>
        <begin position="583"/>
        <end position="597"/>
    </location>
</feature>
<feature type="modified residue" description="Phosphoserine" evidence="14">
    <location>
        <position position="188"/>
    </location>
</feature>
<feature type="lipid moiety-binding region" description="N-myristoyl glycine" evidence="7">
    <location>
        <position position="2"/>
    </location>
</feature>
<feature type="splice variant" id="VSP_025887" description="In isoform 2." evidence="9 10 11">
    <original>VLKTVPFTARTAKRGSRFFCEPVLTEEYHY</original>
    <variation>DLRNQPYRRADAVRRSVRRRFDDQNLRSVNGAEITM</variation>
    <location>
        <begin position="1057"/>
        <end position="1086"/>
    </location>
</feature>
<feature type="sequence variant" id="VAR_032570" description="In dbSNP:rs34119671.">
    <original>Y</original>
    <variation>C</variation>
    <location>
        <position position="352"/>
    </location>
</feature>
<feature type="sequence variant" id="VAR_032571" description="In dbSNP:rs11897929.">
    <original>M</original>
    <variation>T</variation>
    <location>
        <position position="504"/>
    </location>
</feature>
<feature type="sequence conflict" description="In Ref. 1; BAB67795, 3; AAI67159 and 4; CAD39058." evidence="12" ref="1 3 4">
    <original>P</original>
    <variation>PP</variation>
    <location>
        <position position="570"/>
    </location>
</feature>
<feature type="sequence conflict" description="In Ref. 1; BAB67795 and 3; AAI67159." evidence="12" ref="1 3">
    <original>A</original>
    <variation>S</variation>
    <location>
        <position position="579"/>
    </location>
</feature>
<feature type="sequence conflict" description="In Ref. 4; CAD39058." evidence="12" ref="4">
    <original>T</original>
    <variation>R</variation>
    <location>
        <position position="964"/>
    </location>
</feature>
<feature type="turn" evidence="15">
    <location>
        <begin position="36"/>
        <end position="39"/>
    </location>
</feature>
<feature type="helix" evidence="15">
    <location>
        <begin position="40"/>
        <end position="42"/>
    </location>
</feature>
<feature type="helix" evidence="15">
    <location>
        <begin position="46"/>
        <end position="53"/>
    </location>
</feature>
<feature type="helix" evidence="15">
    <location>
        <begin position="57"/>
        <end position="69"/>
    </location>
</feature>
<feature type="helix" evidence="15">
    <location>
        <begin position="76"/>
        <end position="87"/>
    </location>
</feature>
<feature type="helix" evidence="15">
    <location>
        <begin position="93"/>
        <end position="99"/>
    </location>
</feature>
<feature type="helix" evidence="15">
    <location>
        <begin position="100"/>
        <end position="102"/>
    </location>
</feature>
<feature type="helix" evidence="15">
    <location>
        <begin position="103"/>
        <end position="116"/>
    </location>
</feature>
<feature type="helix" evidence="15">
    <location>
        <begin position="119"/>
        <end position="126"/>
    </location>
</feature>
<feature type="turn" evidence="15">
    <location>
        <begin position="128"/>
        <end position="130"/>
    </location>
</feature>
<feature type="helix" evidence="15">
    <location>
        <begin position="132"/>
        <end position="145"/>
    </location>
</feature>
<feature type="helix" evidence="15">
    <location>
        <begin position="206"/>
        <end position="216"/>
    </location>
</feature>
<feature type="strand" evidence="15">
    <location>
        <begin position="217"/>
        <end position="219"/>
    </location>
</feature>
<feature type="helix" evidence="15">
    <location>
        <begin position="220"/>
        <end position="232"/>
    </location>
</feature>
<feature type="helix" evidence="15">
    <location>
        <begin position="235"/>
        <end position="243"/>
    </location>
</feature>
<feature type="helix" evidence="15">
    <location>
        <begin position="247"/>
        <end position="253"/>
    </location>
</feature>
<feature type="helix" evidence="15">
    <location>
        <begin position="254"/>
        <end position="256"/>
    </location>
</feature>
<feature type="helix" evidence="15">
    <location>
        <begin position="260"/>
        <end position="275"/>
    </location>
</feature>
<feature type="helix" evidence="15">
    <location>
        <begin position="279"/>
        <end position="294"/>
    </location>
</feature>
<feature type="helix" evidence="15">
    <location>
        <begin position="301"/>
        <end position="309"/>
    </location>
</feature>
<feature type="helix" evidence="15">
    <location>
        <begin position="314"/>
        <end position="329"/>
    </location>
</feature>
<feature type="helix" evidence="15">
    <location>
        <begin position="334"/>
        <end position="346"/>
    </location>
</feature>
<feature type="helix" evidence="15">
    <location>
        <begin position="349"/>
        <end position="356"/>
    </location>
</feature>
<feature type="helix" evidence="15">
    <location>
        <begin position="362"/>
        <end position="374"/>
    </location>
</feature>
<evidence type="ECO:0000250" key="1"/>
<evidence type="ECO:0000250" key="2">
    <source>
        <dbReference type="UniProtKB" id="Q9VUC6"/>
    </source>
</evidence>
<evidence type="ECO:0000255" key="3">
    <source>
        <dbReference type="PROSITE-ProRule" id="PRU00577"/>
    </source>
</evidence>
<evidence type="ECO:0000255" key="4">
    <source>
        <dbReference type="PROSITE-ProRule" id="PRU00579"/>
    </source>
</evidence>
<evidence type="ECO:0000255" key="5">
    <source>
        <dbReference type="PROSITE-ProRule" id="PRU00774"/>
    </source>
</evidence>
<evidence type="ECO:0000256" key="6">
    <source>
        <dbReference type="SAM" id="MobiDB-lite"/>
    </source>
</evidence>
<evidence type="ECO:0000269" key="7">
    <source>
    </source>
</evidence>
<evidence type="ECO:0000269" key="8">
    <source>
    </source>
</evidence>
<evidence type="ECO:0000303" key="9">
    <source>
    </source>
</evidence>
<evidence type="ECO:0000303" key="10">
    <source>
    </source>
</evidence>
<evidence type="ECO:0000303" key="11">
    <source>
    </source>
</evidence>
<evidence type="ECO:0000305" key="12"/>
<evidence type="ECO:0000312" key="13">
    <source>
        <dbReference type="HGNC" id="HGNC:18267"/>
    </source>
</evidence>
<evidence type="ECO:0007744" key="14">
    <source>
    </source>
</evidence>
<evidence type="ECO:0007829" key="15">
    <source>
        <dbReference type="PDB" id="4YC7"/>
    </source>
</evidence>
<name>FMNL2_HUMAN</name>
<proteinExistence type="evidence at protein level"/>
<sequence>MGNAGSMDSQQTDFRAHNVPLKLPMPEPGELEERFAIVLNAMNLPPDKARLLRQYDNEKKWELICDQERFQVKNPPHTYIQKLKGYLDPAVTRKKFRRRVQESTQVLRELEISLRTNHIGWVREFLNEENKGLDVLVEYLSFAQYAVTFDFESVESTVESSVDKSKPWSRSIEDLHRGSNLPSPVGNSVSRSGRHSALRYNTLPSRRTLKNSRLVSKKDDVHVCIMCLRAIMNYQYGFNMVMSHPHAVNEIALSLNNKNPRTKALVLELLAAVCLVRGGHEIILSAFDNFKEVCGEKQRFEKLMEHFRNEDNNIDFMVASMQFINIVVHSVEDMNFRVHLQYEFTKLGLDEYLDKLKHTESDKLQVQIQAYLDNVFDVGALLEDAETKNAALERVEELEENISHLSEKLQDTENEAMSKIVELEKQLMQRNKELDVVREIYKDANTQVHTLRKMVKEKEEAIQRQSTLEKKIHELEKQGTIKIQKKGDGDIAILPVVASGTLSMGSEVVAGNSVGPTMGAASSGPLPPPPPPLPPSSDTPETVQNGPVTPPMPPPPPPPPPPPPPPPPPPPPPLPGPAAETVPAPPLAPPLPSAPPLPGTSSPTVVFNSGLAAVKIKKPIKTKFRMPVFNWVALKPNQINGTVFNEIDDERILEDLNVDEFEEIFKTKAQGPAIDLSSSKQKIPQKGSNKVTLLEANRAKNLAITLRKAGKTADEICKAIHVFDLKTLPVDFVECLMRFLPTENEVKVLRLYERERKPLENLSDEDRFMMQFSKIERLMQKMTIMAFIGNFAESIQMLTPQLHAIIAASVSIKSSQKLKKILEIILALGNYMNSSKRGAVYGFKLQSLDLLLDTKSTDRKQTLLHYISNVVKEKYHQVSLFYNELHYVEKAAAVSLENVLLDVKELQRGMDLTKREYTMHDHNTLLKEFILNNEGKLKKLQDDAKIAQDAFDDVVKYFGENPKTTPPSVFFPVFVRFVKAYKQAEEENELRKKQEQALMEKLLEQEALMEQQDPKSPSHKSKRQQQELIAELRRRQVKDNRHVYEGKDGAIEDIITVLKTVPFTARTAKRGSRFFCEPVLTEEYHY</sequence>
<dbReference type="EMBL" id="AB067489">
    <property type="protein sequence ID" value="BAB67795.1"/>
    <property type="status" value="ALT_INIT"/>
    <property type="molecule type" value="mRNA"/>
</dbReference>
<dbReference type="EMBL" id="AC012066">
    <property type="status" value="NOT_ANNOTATED_CDS"/>
    <property type="molecule type" value="Genomic_DNA"/>
</dbReference>
<dbReference type="EMBL" id="AC012443">
    <property type="protein sequence ID" value="AAX88959.1"/>
    <property type="status" value="ALT_SEQ"/>
    <property type="molecule type" value="Genomic_DNA"/>
</dbReference>
<dbReference type="EMBL" id="AC093794">
    <property type="status" value="NOT_ANNOTATED_CDS"/>
    <property type="molecule type" value="Genomic_DNA"/>
</dbReference>
<dbReference type="EMBL" id="BC113878">
    <property type="protein sequence ID" value="AAI13879.1"/>
    <property type="status" value="ALT_SEQ"/>
    <property type="molecule type" value="mRNA"/>
</dbReference>
<dbReference type="EMBL" id="BC114438">
    <property type="protein sequence ID" value="AAI14439.1"/>
    <property type="status" value="ALT_SEQ"/>
    <property type="molecule type" value="mRNA"/>
</dbReference>
<dbReference type="EMBL" id="BC167159">
    <property type="protein sequence ID" value="AAI67159.1"/>
    <property type="molecule type" value="mRNA"/>
</dbReference>
<dbReference type="EMBL" id="AL834396">
    <property type="protein sequence ID" value="CAD39058.1"/>
    <property type="molecule type" value="mRNA"/>
</dbReference>
<dbReference type="CCDS" id="CCDS46429.1">
    <molecule id="Q96PY5-3"/>
</dbReference>
<dbReference type="RefSeq" id="NP_443137.2">
    <molecule id="Q96PY5-3"/>
    <property type="nucleotide sequence ID" value="NM_052905.3"/>
</dbReference>
<dbReference type="PDB" id="4YC7">
    <property type="method" value="X-ray"/>
    <property type="resolution" value="2.50 A"/>
    <property type="chains" value="B=1-379"/>
</dbReference>
<dbReference type="PDBsum" id="4YC7"/>
<dbReference type="SMR" id="Q96PY5"/>
<dbReference type="BioGRID" id="125355">
    <property type="interactions" value="180"/>
</dbReference>
<dbReference type="ELM" id="Q96PY5"/>
<dbReference type="FunCoup" id="Q96PY5">
    <property type="interactions" value="1169"/>
</dbReference>
<dbReference type="IntAct" id="Q96PY5">
    <property type="interactions" value="38"/>
</dbReference>
<dbReference type="MINT" id="Q96PY5"/>
<dbReference type="STRING" id="9606.ENSP00000288670"/>
<dbReference type="GlyGen" id="Q96PY5">
    <property type="glycosylation" value="6 sites, 1 O-linked glycan (4 sites)"/>
</dbReference>
<dbReference type="iPTMnet" id="Q96PY5"/>
<dbReference type="PhosphoSitePlus" id="Q96PY5"/>
<dbReference type="SwissPalm" id="Q96PY5"/>
<dbReference type="BioMuta" id="FMNL2"/>
<dbReference type="DMDM" id="238054383"/>
<dbReference type="jPOST" id="Q96PY5"/>
<dbReference type="MassIVE" id="Q96PY5"/>
<dbReference type="PaxDb" id="9606-ENSP00000288670"/>
<dbReference type="PeptideAtlas" id="Q96PY5"/>
<dbReference type="ProteomicsDB" id="77786">
    <molecule id="Q96PY5-1"/>
</dbReference>
<dbReference type="ProteomicsDB" id="77787">
    <molecule id="Q96PY5-3"/>
</dbReference>
<dbReference type="Pumba" id="Q96PY5"/>
<dbReference type="Antibodypedia" id="10309">
    <property type="antibodies" value="102 antibodies from 24 providers"/>
</dbReference>
<dbReference type="DNASU" id="114793"/>
<dbReference type="Ensembl" id="ENST00000288670.14">
    <molecule id="Q96PY5-3"/>
    <property type="protein sequence ID" value="ENSP00000288670.9"/>
    <property type="gene ID" value="ENSG00000157827.20"/>
</dbReference>
<dbReference type="GeneID" id="114793"/>
<dbReference type="KEGG" id="hsa:114793"/>
<dbReference type="MANE-Select" id="ENST00000288670.14">
    <molecule id="Q96PY5-3"/>
    <property type="protein sequence ID" value="ENSP00000288670.9"/>
    <property type="RefSeq nucleotide sequence ID" value="NM_052905.4"/>
    <property type="RefSeq protein sequence ID" value="NP_443137.2"/>
</dbReference>
<dbReference type="UCSC" id="uc002tye.3">
    <molecule id="Q96PY5-1"/>
    <property type="organism name" value="human"/>
</dbReference>
<dbReference type="AGR" id="HGNC:18267"/>
<dbReference type="CTD" id="114793"/>
<dbReference type="DisGeNET" id="114793"/>
<dbReference type="GeneCards" id="FMNL2"/>
<dbReference type="HGNC" id="HGNC:18267">
    <property type="gene designation" value="FMNL2"/>
</dbReference>
<dbReference type="HPA" id="ENSG00000157827">
    <property type="expression patterns" value="Tissue enriched (brain)"/>
</dbReference>
<dbReference type="MIM" id="616285">
    <property type="type" value="gene"/>
</dbReference>
<dbReference type="neXtProt" id="NX_Q96PY5"/>
<dbReference type="OpenTargets" id="ENSG00000157827"/>
<dbReference type="PharmGKB" id="PA28144"/>
<dbReference type="VEuPathDB" id="HostDB:ENSG00000157827"/>
<dbReference type="eggNOG" id="KOG1923">
    <property type="taxonomic scope" value="Eukaryota"/>
</dbReference>
<dbReference type="GeneTree" id="ENSGT00940000155515"/>
<dbReference type="HOGENOM" id="CLU_003597_0_0_1"/>
<dbReference type="InParanoid" id="Q96PY5"/>
<dbReference type="OMA" id="MMPGFSP"/>
<dbReference type="OrthoDB" id="1104827at2759"/>
<dbReference type="PAN-GO" id="Q96PY5">
    <property type="GO annotations" value="5 GO annotations based on evolutionary models"/>
</dbReference>
<dbReference type="PhylomeDB" id="Q96PY5"/>
<dbReference type="TreeFam" id="TF325155"/>
<dbReference type="PathwayCommons" id="Q96PY5"/>
<dbReference type="Reactome" id="R-HSA-5663220">
    <property type="pathway name" value="RHO GTPases Activate Formins"/>
</dbReference>
<dbReference type="Reactome" id="R-HSA-9013106">
    <property type="pathway name" value="RHOC GTPase cycle"/>
</dbReference>
<dbReference type="Reactome" id="R-HSA-9013148">
    <property type="pathway name" value="CDC42 GTPase cycle"/>
</dbReference>
<dbReference type="SignaLink" id="Q96PY5"/>
<dbReference type="SIGNOR" id="Q96PY5"/>
<dbReference type="BioGRID-ORCS" id="114793">
    <property type="hits" value="27 hits in 1150 CRISPR screens"/>
</dbReference>
<dbReference type="CD-CODE" id="FB4E32DD">
    <property type="entry name" value="Presynaptic clusters and postsynaptic densities"/>
</dbReference>
<dbReference type="ChiTaRS" id="FMNL2">
    <property type="organism name" value="human"/>
</dbReference>
<dbReference type="EvolutionaryTrace" id="Q96PY5"/>
<dbReference type="GeneWiki" id="FMNL2"/>
<dbReference type="GenomeRNAi" id="114793"/>
<dbReference type="Pharos" id="Q96PY5">
    <property type="development level" value="Tbio"/>
</dbReference>
<dbReference type="PRO" id="PR:Q96PY5"/>
<dbReference type="Proteomes" id="UP000005640">
    <property type="component" value="Chromosome 2"/>
</dbReference>
<dbReference type="RNAct" id="Q96PY5">
    <property type="molecule type" value="protein"/>
</dbReference>
<dbReference type="Bgee" id="ENSG00000157827">
    <property type="expression patterns" value="Expressed in inferior vagus X ganglion and 188 other cell types or tissues"/>
</dbReference>
<dbReference type="ExpressionAtlas" id="Q96PY5">
    <property type="expression patterns" value="baseline and differential"/>
</dbReference>
<dbReference type="GO" id="GO:0005829">
    <property type="term" value="C:cytosol"/>
    <property type="evidence" value="ECO:0000318"/>
    <property type="project" value="GO_Central"/>
</dbReference>
<dbReference type="GO" id="GO:0051015">
    <property type="term" value="F:actin filament binding"/>
    <property type="evidence" value="ECO:0000318"/>
    <property type="project" value="GO_Central"/>
</dbReference>
<dbReference type="GO" id="GO:0045296">
    <property type="term" value="F:cadherin binding"/>
    <property type="evidence" value="ECO:0007005"/>
    <property type="project" value="BHF-UCL"/>
</dbReference>
<dbReference type="GO" id="GO:0031267">
    <property type="term" value="F:small GTPase binding"/>
    <property type="evidence" value="ECO:0007669"/>
    <property type="project" value="InterPro"/>
</dbReference>
<dbReference type="GO" id="GO:0016477">
    <property type="term" value="P:cell migration"/>
    <property type="evidence" value="ECO:0000318"/>
    <property type="project" value="GO_Central"/>
</dbReference>
<dbReference type="GO" id="GO:0030866">
    <property type="term" value="P:cortical actin cytoskeleton organization"/>
    <property type="evidence" value="ECO:0000315"/>
    <property type="project" value="UniProtKB"/>
</dbReference>
<dbReference type="GO" id="GO:0007010">
    <property type="term" value="P:cytoskeleton organization"/>
    <property type="evidence" value="ECO:0000315"/>
    <property type="project" value="UniProtKB"/>
</dbReference>
<dbReference type="GO" id="GO:0022604">
    <property type="term" value="P:regulation of cell morphogenesis"/>
    <property type="evidence" value="ECO:0000315"/>
    <property type="project" value="UniProtKB"/>
</dbReference>
<dbReference type="GO" id="GO:0008360">
    <property type="term" value="P:regulation of cell shape"/>
    <property type="evidence" value="ECO:0000318"/>
    <property type="project" value="GO_Central"/>
</dbReference>
<dbReference type="DisProt" id="DP02609"/>
<dbReference type="FunFam" id="1.20.58.2220:FF:000001">
    <property type="entry name" value="Formin-like 1, isoform CRA_c"/>
    <property type="match status" value="1"/>
</dbReference>
<dbReference type="FunFam" id="1.25.10.10:FF:000036">
    <property type="entry name" value="Formin-like protein 3 isoform 1"/>
    <property type="match status" value="1"/>
</dbReference>
<dbReference type="FunFam" id="1.25.10.10:FF:000045">
    <property type="entry name" value="Formin-like protein 3 isoform 1"/>
    <property type="match status" value="1"/>
</dbReference>
<dbReference type="Gene3D" id="1.20.58.2220">
    <property type="entry name" value="Formin, FH2 domain"/>
    <property type="match status" value="1"/>
</dbReference>
<dbReference type="Gene3D" id="1.25.10.10">
    <property type="entry name" value="Leucine-rich Repeat Variant"/>
    <property type="match status" value="2"/>
</dbReference>
<dbReference type="InterPro" id="IPR011989">
    <property type="entry name" value="ARM-like"/>
</dbReference>
<dbReference type="InterPro" id="IPR016024">
    <property type="entry name" value="ARM-type_fold"/>
</dbReference>
<dbReference type="InterPro" id="IPR014767">
    <property type="entry name" value="DAD_dom"/>
</dbReference>
<dbReference type="InterPro" id="IPR015425">
    <property type="entry name" value="FH2_Formin"/>
</dbReference>
<dbReference type="InterPro" id="IPR042201">
    <property type="entry name" value="FH2_Formin_sf"/>
</dbReference>
<dbReference type="InterPro" id="IPR010472">
    <property type="entry name" value="FH3_dom"/>
</dbReference>
<dbReference type="InterPro" id="IPR043592">
    <property type="entry name" value="FMNL_animal"/>
</dbReference>
<dbReference type="InterPro" id="IPR014768">
    <property type="entry name" value="GBD/FH3_dom"/>
</dbReference>
<dbReference type="InterPro" id="IPR010473">
    <property type="entry name" value="GTPase-bd"/>
</dbReference>
<dbReference type="PANTHER" id="PTHR45857">
    <property type="entry name" value="FORMIN-LIKE PROTEIN"/>
    <property type="match status" value="1"/>
</dbReference>
<dbReference type="PANTHER" id="PTHR45857:SF5">
    <property type="entry name" value="FORMIN-LIKE PROTEIN 2"/>
    <property type="match status" value="1"/>
</dbReference>
<dbReference type="Pfam" id="PF06367">
    <property type="entry name" value="Drf_FH3"/>
    <property type="match status" value="1"/>
</dbReference>
<dbReference type="Pfam" id="PF06371">
    <property type="entry name" value="Drf_GBD"/>
    <property type="match status" value="2"/>
</dbReference>
<dbReference type="Pfam" id="PF02181">
    <property type="entry name" value="FH2"/>
    <property type="match status" value="1"/>
</dbReference>
<dbReference type="PRINTS" id="PR00049">
    <property type="entry name" value="WILMSTUMOUR"/>
</dbReference>
<dbReference type="SMART" id="SM01139">
    <property type="entry name" value="Drf_FH3"/>
    <property type="match status" value="1"/>
</dbReference>
<dbReference type="SMART" id="SM01140">
    <property type="entry name" value="Drf_GBD"/>
    <property type="match status" value="1"/>
</dbReference>
<dbReference type="SMART" id="SM00498">
    <property type="entry name" value="FH2"/>
    <property type="match status" value="1"/>
</dbReference>
<dbReference type="SUPFAM" id="SSF48371">
    <property type="entry name" value="ARM repeat"/>
    <property type="match status" value="1"/>
</dbReference>
<dbReference type="SUPFAM" id="SSF101447">
    <property type="entry name" value="Formin homology 2 domain (FH2 domain)"/>
    <property type="match status" value="1"/>
</dbReference>
<dbReference type="PROSITE" id="PS51231">
    <property type="entry name" value="DAD"/>
    <property type="match status" value="1"/>
</dbReference>
<dbReference type="PROSITE" id="PS51444">
    <property type="entry name" value="FH2"/>
    <property type="match status" value="1"/>
</dbReference>
<dbReference type="PROSITE" id="PS51232">
    <property type="entry name" value="GBD_FH3"/>
    <property type="match status" value="1"/>
</dbReference>
<reference key="1">
    <citation type="journal article" date="2001" name="DNA Res.">
        <title>Prediction of the coding sequences of unidentified human genes. XXI. The complete sequences of 60 new cDNA clones from brain which code for large proteins.</title>
        <authorList>
            <person name="Nagase T."/>
            <person name="Kikuno R."/>
            <person name="Ohara O."/>
        </authorList>
    </citation>
    <scope>NUCLEOTIDE SEQUENCE [LARGE SCALE MRNA] (ISOFORM 2)</scope>
    <source>
        <tissue>Brain</tissue>
    </source>
</reference>
<reference key="2">
    <citation type="journal article" date="2005" name="Nature">
        <title>Generation and annotation of the DNA sequences of human chromosomes 2 and 4.</title>
        <authorList>
            <person name="Hillier L.W."/>
            <person name="Graves T.A."/>
            <person name="Fulton R.S."/>
            <person name="Fulton L.A."/>
            <person name="Pepin K.H."/>
            <person name="Minx P."/>
            <person name="Wagner-McPherson C."/>
            <person name="Layman D."/>
            <person name="Wylie K."/>
            <person name="Sekhon M."/>
            <person name="Becker M.C."/>
            <person name="Fewell G.A."/>
            <person name="Delehaunty K.D."/>
            <person name="Miner T.L."/>
            <person name="Nash W.E."/>
            <person name="Kremitzki C."/>
            <person name="Oddy L."/>
            <person name="Du H."/>
            <person name="Sun H."/>
            <person name="Bradshaw-Cordum H."/>
            <person name="Ali J."/>
            <person name="Carter J."/>
            <person name="Cordes M."/>
            <person name="Harris A."/>
            <person name="Isak A."/>
            <person name="van Brunt A."/>
            <person name="Nguyen C."/>
            <person name="Du F."/>
            <person name="Courtney L."/>
            <person name="Kalicki J."/>
            <person name="Ozersky P."/>
            <person name="Abbott S."/>
            <person name="Armstrong J."/>
            <person name="Belter E.A."/>
            <person name="Caruso L."/>
            <person name="Cedroni M."/>
            <person name="Cotton M."/>
            <person name="Davidson T."/>
            <person name="Desai A."/>
            <person name="Elliott G."/>
            <person name="Erb T."/>
            <person name="Fronick C."/>
            <person name="Gaige T."/>
            <person name="Haakenson W."/>
            <person name="Haglund K."/>
            <person name="Holmes A."/>
            <person name="Harkins R."/>
            <person name="Kim K."/>
            <person name="Kruchowski S.S."/>
            <person name="Strong C.M."/>
            <person name="Grewal N."/>
            <person name="Goyea E."/>
            <person name="Hou S."/>
            <person name="Levy A."/>
            <person name="Martinka S."/>
            <person name="Mead K."/>
            <person name="McLellan M.D."/>
            <person name="Meyer R."/>
            <person name="Randall-Maher J."/>
            <person name="Tomlinson C."/>
            <person name="Dauphin-Kohlberg S."/>
            <person name="Kozlowicz-Reilly A."/>
            <person name="Shah N."/>
            <person name="Swearengen-Shahid S."/>
            <person name="Snider J."/>
            <person name="Strong J.T."/>
            <person name="Thompson J."/>
            <person name="Yoakum M."/>
            <person name="Leonard S."/>
            <person name="Pearman C."/>
            <person name="Trani L."/>
            <person name="Radionenko M."/>
            <person name="Waligorski J.E."/>
            <person name="Wang C."/>
            <person name="Rock S.M."/>
            <person name="Tin-Wollam A.-M."/>
            <person name="Maupin R."/>
            <person name="Latreille P."/>
            <person name="Wendl M.C."/>
            <person name="Yang S.-P."/>
            <person name="Pohl C."/>
            <person name="Wallis J.W."/>
            <person name="Spieth J."/>
            <person name="Bieri T.A."/>
            <person name="Berkowicz N."/>
            <person name="Nelson J.O."/>
            <person name="Osborne J."/>
            <person name="Ding L."/>
            <person name="Meyer R."/>
            <person name="Sabo A."/>
            <person name="Shotland Y."/>
            <person name="Sinha P."/>
            <person name="Wohldmann P.E."/>
            <person name="Cook L.L."/>
            <person name="Hickenbotham M.T."/>
            <person name="Eldred J."/>
            <person name="Williams D."/>
            <person name="Jones T.A."/>
            <person name="She X."/>
            <person name="Ciccarelli F.D."/>
            <person name="Izaurralde E."/>
            <person name="Taylor J."/>
            <person name="Schmutz J."/>
            <person name="Myers R.M."/>
            <person name="Cox D.R."/>
            <person name="Huang X."/>
            <person name="McPherson J.D."/>
            <person name="Mardis E.R."/>
            <person name="Clifton S.W."/>
            <person name="Warren W.C."/>
            <person name="Chinwalla A.T."/>
            <person name="Eddy S.R."/>
            <person name="Marra M.A."/>
            <person name="Ovcharenko I."/>
            <person name="Furey T.S."/>
            <person name="Miller W."/>
            <person name="Eichler E.E."/>
            <person name="Bork P."/>
            <person name="Suyama M."/>
            <person name="Torrents D."/>
            <person name="Waterston R.H."/>
            <person name="Wilson R.K."/>
        </authorList>
    </citation>
    <scope>NUCLEOTIDE SEQUENCE [LARGE SCALE GENOMIC DNA]</scope>
</reference>
<reference key="3">
    <citation type="journal article" date="2004" name="Genome Res.">
        <title>The status, quality, and expansion of the NIH full-length cDNA project: the Mammalian Gene Collection (MGC).</title>
        <authorList>
            <consortium name="The MGC Project Team"/>
        </authorList>
    </citation>
    <scope>NUCLEOTIDE SEQUENCE [LARGE SCALE MRNA] (ISOFORM 2)</scope>
</reference>
<reference key="4">
    <citation type="journal article" date="2007" name="BMC Genomics">
        <title>The full-ORF clone resource of the German cDNA consortium.</title>
        <authorList>
            <person name="Bechtel S."/>
            <person name="Rosenfelder H."/>
            <person name="Duda A."/>
            <person name="Schmidt C.P."/>
            <person name="Ernst U."/>
            <person name="Wellenreuther R."/>
            <person name="Mehrle A."/>
            <person name="Schuster C."/>
            <person name="Bahr A."/>
            <person name="Bloecker H."/>
            <person name="Heubner D."/>
            <person name="Hoerlein A."/>
            <person name="Michel G."/>
            <person name="Wedler H."/>
            <person name="Koehrer K."/>
            <person name="Ottenwaelder B."/>
            <person name="Poustka A."/>
            <person name="Wiemann S."/>
            <person name="Schupp I."/>
        </authorList>
    </citation>
    <scope>NUCLEOTIDE SEQUENCE [LARGE SCALE MRNA] OF 85-1086 (ISOFORM 2)</scope>
    <source>
        <tissue>Amygdala</tissue>
    </source>
</reference>
<reference key="5">
    <citation type="journal article" date="2003" name="Int. J. Oncol.">
        <title>Identification and characterization of human FMNL1, FMNL2 and FMNL3 genes in silico.</title>
        <authorList>
            <person name="Katoh M."/>
            <person name="Katoh M."/>
        </authorList>
    </citation>
    <scope>IDENTIFICATION (ISOFORMS 1 AND 2)</scope>
</reference>
<reference key="6">
    <citation type="journal article" date="2008" name="Proc. Natl. Acad. Sci. U.S.A.">
        <title>A quantitative atlas of mitotic phosphorylation.</title>
        <authorList>
            <person name="Dephoure N."/>
            <person name="Zhou C."/>
            <person name="Villen J."/>
            <person name="Beausoleil S.A."/>
            <person name="Bakalarski C.E."/>
            <person name="Elledge S.J."/>
            <person name="Gygi S.P."/>
        </authorList>
    </citation>
    <scope>IDENTIFICATION BY MASS SPECTROMETRY [LARGE SCALE ANALYSIS]</scope>
    <source>
        <tissue>Cervix carcinoma</tissue>
    </source>
</reference>
<reference key="7">
    <citation type="journal article" date="2010" name="Proteomics">
        <title>Strategy for comprehensive identification of human N-myristoylated proteins using an insect cell-free protein synthesis system.</title>
        <authorList>
            <person name="Suzuki T."/>
            <person name="Moriya K."/>
            <person name="Nagatoshi K."/>
            <person name="Ota Y."/>
            <person name="Ezure T."/>
            <person name="Ando E."/>
            <person name="Tsunasawa S."/>
            <person name="Utsumi T."/>
        </authorList>
    </citation>
    <scope>MYRISTOYLATION AT GLY-2</scope>
</reference>
<reference key="8">
    <citation type="journal article" date="2011" name="BMC Biol.">
        <title>Identification and characterization of a set of conserved and new regulators of cytoskeletal organisation, cell morphology and migration.</title>
        <authorList>
            <person name="Bai S.W."/>
            <person name="Herrera-Abreu M.T."/>
            <person name="Rohn J.L."/>
            <person name="Racine V."/>
            <person name="Tajadura V."/>
            <person name="Suryavanshi N."/>
            <person name="Bechtel S."/>
            <person name="Wiemann S."/>
            <person name="Baum B."/>
            <person name="Ridley A.J."/>
        </authorList>
    </citation>
    <scope>FUNCTION</scope>
</reference>
<reference key="9">
    <citation type="journal article" date="2011" name="Sci. Signal.">
        <title>System-wide temporal characterization of the proteome and phosphoproteome of human embryonic stem cell differentiation.</title>
        <authorList>
            <person name="Rigbolt K.T."/>
            <person name="Prokhorova T.A."/>
            <person name="Akimov V."/>
            <person name="Henningsen J."/>
            <person name="Johansen P.T."/>
            <person name="Kratchmarova I."/>
            <person name="Kassem M."/>
            <person name="Mann M."/>
            <person name="Olsen J.V."/>
            <person name="Blagoev B."/>
        </authorList>
    </citation>
    <scope>IDENTIFICATION BY MASS SPECTROMETRY [LARGE SCALE ANALYSIS]</scope>
</reference>
<reference key="10">
    <citation type="journal article" date="2013" name="J. Proteome Res.">
        <title>Toward a comprehensive characterization of a human cancer cell phosphoproteome.</title>
        <authorList>
            <person name="Zhou H."/>
            <person name="Di Palma S."/>
            <person name="Preisinger C."/>
            <person name="Peng M."/>
            <person name="Polat A.N."/>
            <person name="Heck A.J."/>
            <person name="Mohammed S."/>
        </authorList>
    </citation>
    <scope>PHOSPHORYLATION [LARGE SCALE ANALYSIS] AT SER-188</scope>
    <scope>IDENTIFICATION BY MASS SPECTROMETRY [LARGE SCALE ANALYSIS]</scope>
    <source>
        <tissue>Cervix carcinoma</tissue>
    </source>
</reference>
<comment type="function">
    <text evidence="8">Plays a role in the regulation of cell morphology and cytoskeletal organization. Required in the cortical actin filament dynamics.</text>
</comment>
<comment type="subcellular location">
    <subcellularLocation>
        <location evidence="1">Cytoplasm</location>
    </subcellularLocation>
</comment>
<comment type="alternative products">
    <event type="alternative splicing"/>
    <isoform>
        <id>Q96PY5-1</id>
        <name>1</name>
        <sequence type="displayed"/>
    </isoform>
    <isoform>
        <id>Q96PY5-3</id>
        <name>2</name>
        <sequence type="described" ref="VSP_025887"/>
    </isoform>
</comment>
<comment type="domain">
    <text evidence="2">The DAD domain regulates activation via by an autoinhibitory interaction with the GBD/FH3 domain. This autoinhibition is released upon competitive binding of an activated GTPase. The release of DAD allows the FH2 domain to then nucleate and elongate nonbranched actin filaments (By similarity).</text>
</comment>
<comment type="similarity">
    <text evidence="12">Belongs to the formin homology family.</text>
</comment>
<comment type="sequence caution" evidence="12">
    <conflict type="miscellaneous discrepancy">
        <sequence resource="EMBL-CDS" id="AAI13879"/>
    </conflict>
    <text>Aberrant splicing.</text>
</comment>
<comment type="sequence caution" evidence="12">
    <conflict type="miscellaneous discrepancy">
        <sequence resource="EMBL-CDS" id="AAI14439"/>
    </conflict>
    <text>Aberrant splicing.</text>
</comment>
<comment type="sequence caution" evidence="12">
    <conflict type="erroneous gene model prediction">
        <sequence resource="EMBL-CDS" id="AAX88959"/>
    </conflict>
</comment>
<comment type="sequence caution" evidence="12">
    <conflict type="erroneous initiation">
        <sequence resource="EMBL-CDS" id="BAB67795"/>
    </conflict>
    <text>Extended N-terminus.</text>
</comment>
<protein>
    <recommendedName>
        <fullName evidence="12">Formin-like protein 2</fullName>
    </recommendedName>
    <alternativeName>
        <fullName>Formin homology 2 domain-containing protein 2</fullName>
    </alternativeName>
</protein>
<gene>
    <name evidence="13" type="primary">FMNL2</name>
    <name type="synonym">FHOD2</name>
    <name type="synonym">KIAA1902</name>
</gene>
<keyword id="KW-0002">3D-structure</keyword>
<keyword id="KW-0025">Alternative splicing</keyword>
<keyword id="KW-0963">Cytoplasm</keyword>
<keyword id="KW-0449">Lipoprotein</keyword>
<keyword id="KW-0519">Myristate</keyword>
<keyword id="KW-0597">Phosphoprotein</keyword>
<keyword id="KW-1267">Proteomics identification</keyword>
<keyword id="KW-1185">Reference proteome</keyword>
<accession>Q96PY5</accession>
<accession>B2RZH5</accession>
<accession>Q14CC9</accession>
<accession>Q4ZG52</accession>
<accession>Q8N3E0</accession>
<organism>
    <name type="scientific">Homo sapiens</name>
    <name type="common">Human</name>
    <dbReference type="NCBI Taxonomy" id="9606"/>
    <lineage>
        <taxon>Eukaryota</taxon>
        <taxon>Metazoa</taxon>
        <taxon>Chordata</taxon>
        <taxon>Craniata</taxon>
        <taxon>Vertebrata</taxon>
        <taxon>Euteleostomi</taxon>
        <taxon>Mammalia</taxon>
        <taxon>Eutheria</taxon>
        <taxon>Euarchontoglires</taxon>
        <taxon>Primates</taxon>
        <taxon>Haplorrhini</taxon>
        <taxon>Catarrhini</taxon>
        <taxon>Hominidae</taxon>
        <taxon>Homo</taxon>
    </lineage>
</organism>